<gene>
    <name type="primary">vraS</name>
    <name type="ordered locus">SH1070</name>
</gene>
<reference key="1">
    <citation type="journal article" date="2005" name="J. Bacteriol.">
        <title>Whole-genome sequencing of Staphylococcus haemolyticus uncovers the extreme plasticity of its genome and the evolution of human-colonizing staphylococcal species.</title>
        <authorList>
            <person name="Takeuchi F."/>
            <person name="Watanabe S."/>
            <person name="Baba T."/>
            <person name="Yuzawa H."/>
            <person name="Ito T."/>
            <person name="Morimoto Y."/>
            <person name="Kuroda M."/>
            <person name="Cui L."/>
            <person name="Takahashi M."/>
            <person name="Ankai A."/>
            <person name="Baba S."/>
            <person name="Fukui S."/>
            <person name="Lee J.C."/>
            <person name="Hiramatsu K."/>
        </authorList>
    </citation>
    <scope>NUCLEOTIDE SEQUENCE [LARGE SCALE GENOMIC DNA]</scope>
    <source>
        <strain>JCSC1435</strain>
    </source>
</reference>
<organism>
    <name type="scientific">Staphylococcus haemolyticus (strain JCSC1435)</name>
    <dbReference type="NCBI Taxonomy" id="279808"/>
    <lineage>
        <taxon>Bacteria</taxon>
        <taxon>Bacillati</taxon>
        <taxon>Bacillota</taxon>
        <taxon>Bacilli</taxon>
        <taxon>Bacillales</taxon>
        <taxon>Staphylococcaceae</taxon>
        <taxon>Staphylococcus</taxon>
    </lineage>
</organism>
<protein>
    <recommendedName>
        <fullName>Sensor protein VraS</fullName>
        <ecNumber>2.7.13.3</ecNumber>
    </recommendedName>
</protein>
<evidence type="ECO:0000250" key="1"/>
<evidence type="ECO:0000255" key="2"/>
<evidence type="ECO:0000305" key="3"/>
<feature type="chain" id="PRO_0000074907" description="Sensor protein VraS">
    <location>
        <begin position="1"/>
        <end position="348"/>
    </location>
</feature>
<feature type="transmembrane region" description="Helical" evidence="2">
    <location>
        <begin position="13"/>
        <end position="33"/>
    </location>
</feature>
<feature type="transmembrane region" description="Helical" evidence="2">
    <location>
        <begin position="43"/>
        <end position="63"/>
    </location>
</feature>
<feature type="domain" description="Histidine kinase">
    <location>
        <begin position="150"/>
        <end position="341"/>
    </location>
</feature>
<accession>Q4L7J6</accession>
<sequence length="348" mass="40180">MNHYLRAIGSMLILVYSMLTAFLFIDKVFVNIIYFQGMFYTQIFGIPVFLFLNLVIILLCIIVGSILAYKINQQNQWIKSQIEHAIEGETVGINDQNIELYNETIDLYQTLVPLNQELHRLRMKTQNLTNENYNMNDVKVKKIIENERQRLARELHDSVSQQLFAASMMLSAIKETKLEAPLDQQIPVLEKMVQESQLEMRALLLHLRPLGLKDKSLGEGIKDLVIDLQKKVPMKVIHDIQDFKVPKGIEDHLFRITQEAISNTLRHSNGTKVTVELFNQQDYLLLRIQDNGKGFNVDEKLEQSYGLKNMRERALEIGATFHIVSLPDSGTRIEVKAPLNREDDNNDD</sequence>
<name>VRAS_STAHJ</name>
<proteinExistence type="inferred from homology"/>
<keyword id="KW-0067">ATP-binding</keyword>
<keyword id="KW-1003">Cell membrane</keyword>
<keyword id="KW-0418">Kinase</keyword>
<keyword id="KW-0472">Membrane</keyword>
<keyword id="KW-0547">Nucleotide-binding</keyword>
<keyword id="KW-0597">Phosphoprotein</keyword>
<keyword id="KW-0808">Transferase</keyword>
<keyword id="KW-0812">Transmembrane</keyword>
<keyword id="KW-1133">Transmembrane helix</keyword>
<keyword id="KW-0902">Two-component regulatory system</keyword>
<comment type="function">
    <text evidence="1">Member of the two-component regulatory system VraS/VraR involved in the control of the cell wall peptidoglycan biosynthesis. Probably activates VraR by phosphorylation (By similarity).</text>
</comment>
<comment type="catalytic activity">
    <reaction>
        <text>ATP + protein L-histidine = ADP + protein N-phospho-L-histidine.</text>
        <dbReference type="EC" id="2.7.13.3"/>
    </reaction>
</comment>
<comment type="subcellular location">
    <subcellularLocation>
        <location evidence="3">Cell membrane</location>
        <topology evidence="3">Multi-pass membrane protein</topology>
    </subcellularLocation>
</comment>
<dbReference type="EC" id="2.7.13.3"/>
<dbReference type="EMBL" id="AP006716">
    <property type="protein sequence ID" value="BAE04379.1"/>
    <property type="molecule type" value="Genomic_DNA"/>
</dbReference>
<dbReference type="RefSeq" id="WP_011275375.1">
    <property type="nucleotide sequence ID" value="NC_007168.1"/>
</dbReference>
<dbReference type="SMR" id="Q4L7J6"/>
<dbReference type="KEGG" id="sha:SH1070"/>
<dbReference type="eggNOG" id="COG4585">
    <property type="taxonomic scope" value="Bacteria"/>
</dbReference>
<dbReference type="HOGENOM" id="CLU_000445_20_12_9"/>
<dbReference type="OrthoDB" id="9795828at2"/>
<dbReference type="Proteomes" id="UP000000543">
    <property type="component" value="Chromosome"/>
</dbReference>
<dbReference type="GO" id="GO:0005886">
    <property type="term" value="C:plasma membrane"/>
    <property type="evidence" value="ECO:0007669"/>
    <property type="project" value="UniProtKB-SubCell"/>
</dbReference>
<dbReference type="GO" id="GO:0005524">
    <property type="term" value="F:ATP binding"/>
    <property type="evidence" value="ECO:0007669"/>
    <property type="project" value="UniProtKB-KW"/>
</dbReference>
<dbReference type="GO" id="GO:0000155">
    <property type="term" value="F:phosphorelay sensor kinase activity"/>
    <property type="evidence" value="ECO:0007669"/>
    <property type="project" value="InterPro"/>
</dbReference>
<dbReference type="GO" id="GO:0046983">
    <property type="term" value="F:protein dimerization activity"/>
    <property type="evidence" value="ECO:0007669"/>
    <property type="project" value="InterPro"/>
</dbReference>
<dbReference type="CDD" id="cd16917">
    <property type="entry name" value="HATPase_UhpB-NarQ-NarX-like"/>
    <property type="match status" value="1"/>
</dbReference>
<dbReference type="Gene3D" id="1.20.5.1930">
    <property type="match status" value="1"/>
</dbReference>
<dbReference type="Gene3D" id="3.30.565.10">
    <property type="entry name" value="Histidine kinase-like ATPase, C-terminal domain"/>
    <property type="match status" value="1"/>
</dbReference>
<dbReference type="InterPro" id="IPR036890">
    <property type="entry name" value="HATPase_C_sf"/>
</dbReference>
<dbReference type="InterPro" id="IPR017202">
    <property type="entry name" value="LiaS/VraS"/>
</dbReference>
<dbReference type="InterPro" id="IPR050482">
    <property type="entry name" value="Sensor_HK_TwoCompSys"/>
</dbReference>
<dbReference type="InterPro" id="IPR011712">
    <property type="entry name" value="Sig_transdc_His_kin_sub3_dim/P"/>
</dbReference>
<dbReference type="PANTHER" id="PTHR24421">
    <property type="entry name" value="NITRATE/NITRITE SENSOR PROTEIN NARX-RELATED"/>
    <property type="match status" value="1"/>
</dbReference>
<dbReference type="PANTHER" id="PTHR24421:SF37">
    <property type="entry name" value="SENSOR HISTIDINE KINASE NARS"/>
    <property type="match status" value="1"/>
</dbReference>
<dbReference type="Pfam" id="PF02518">
    <property type="entry name" value="HATPase_c"/>
    <property type="match status" value="1"/>
</dbReference>
<dbReference type="Pfam" id="PF07730">
    <property type="entry name" value="HisKA_3"/>
    <property type="match status" value="1"/>
</dbReference>
<dbReference type="PIRSF" id="PIRSF037431">
    <property type="entry name" value="STHK_LiaS"/>
    <property type="match status" value="1"/>
</dbReference>
<dbReference type="SMART" id="SM00387">
    <property type="entry name" value="HATPase_c"/>
    <property type="match status" value="1"/>
</dbReference>
<dbReference type="SUPFAM" id="SSF55874">
    <property type="entry name" value="ATPase domain of HSP90 chaperone/DNA topoisomerase II/histidine kinase"/>
    <property type="match status" value="1"/>
</dbReference>